<feature type="chain" id="PRO_0000317299" description="WASH complex subunit 2A">
    <location>
        <begin position="1"/>
        <end position="1341"/>
    </location>
</feature>
<feature type="region of interest" description="Sufficient for interaction with WASHC3, WASHC4 and WASHC5; required for interaction with WASHC1" evidence="1">
    <location>
        <begin position="1"/>
        <end position="220"/>
    </location>
</feature>
<feature type="region of interest" description="Disordered" evidence="2">
    <location>
        <begin position="202"/>
        <end position="405"/>
    </location>
</feature>
<feature type="region of interest" description="Required for interaction with CCDC22 and VPS35L" evidence="3">
    <location>
        <begin position="356"/>
        <end position="742"/>
    </location>
</feature>
<feature type="region of interest" description="Sufficient for interaction with CCDC93" evidence="3">
    <location>
        <begin position="356"/>
        <end position="600"/>
    </location>
</feature>
<feature type="region of interest" description="Interaction with VPS35" evidence="1">
    <location>
        <begin position="357"/>
        <end position="1341"/>
    </location>
</feature>
<feature type="region of interest" description="Disordered" evidence="2">
    <location>
        <begin position="422"/>
        <end position="554"/>
    </location>
</feature>
<feature type="region of interest" description="Disordered" evidence="2">
    <location>
        <begin position="621"/>
        <end position="664"/>
    </location>
</feature>
<feature type="region of interest" description="Disordered" evidence="2">
    <location>
        <begin position="696"/>
        <end position="739"/>
    </location>
</feature>
<feature type="region of interest" description="Disordered" evidence="2">
    <location>
        <begin position="751"/>
        <end position="838"/>
    </location>
</feature>
<feature type="region of interest" description="Disordered" evidence="2">
    <location>
        <begin position="881"/>
        <end position="951"/>
    </location>
</feature>
<feature type="region of interest" description="Interaction with phospholipids" evidence="1">
    <location>
        <begin position="937"/>
        <end position="1341"/>
    </location>
</feature>
<feature type="region of interest" description="Disordered" evidence="2">
    <location>
        <begin position="988"/>
        <end position="1205"/>
    </location>
</feature>
<feature type="region of interest" description="Required for interaction with F-actin-capping protein subunit alpha (CAPZA1 or CAPZA2 or CAPZA3)" evidence="1">
    <location>
        <begin position="1029"/>
        <end position="1047"/>
    </location>
</feature>
<feature type="region of interest" description="Disordered" evidence="2">
    <location>
        <begin position="1302"/>
        <end position="1326"/>
    </location>
</feature>
<feature type="short sequence motif" description="LFa 1" evidence="1">
    <location>
        <begin position="367"/>
        <end position="378"/>
    </location>
</feature>
<feature type="short sequence motif" description="LFa 2" evidence="1">
    <location>
        <begin position="411"/>
        <end position="419"/>
    </location>
</feature>
<feature type="short sequence motif" description="LFa 3" evidence="1">
    <location>
        <begin position="450"/>
        <end position="463"/>
    </location>
</feature>
<feature type="short sequence motif" description="LFa 4" evidence="1">
    <location>
        <begin position="482"/>
        <end position="491"/>
    </location>
</feature>
<feature type="short sequence motif" description="LFa 5" evidence="1">
    <location>
        <begin position="537"/>
        <end position="548"/>
    </location>
</feature>
<feature type="short sequence motif" description="LFa 6" evidence="1">
    <location>
        <begin position="572"/>
        <end position="583"/>
    </location>
</feature>
<feature type="short sequence motif" description="LFa 7" evidence="1">
    <location>
        <begin position="617"/>
        <end position="629"/>
    </location>
</feature>
<feature type="short sequence motif" description="LFa 8" evidence="1">
    <location>
        <begin position="664"/>
        <end position="674"/>
    </location>
</feature>
<feature type="short sequence motif" description="LFa 9" evidence="1">
    <location>
        <begin position="690"/>
        <end position="702"/>
    </location>
</feature>
<feature type="short sequence motif" description="LFa 10" evidence="1">
    <location>
        <begin position="726"/>
        <end position="738"/>
    </location>
</feature>
<feature type="short sequence motif" description="LFa 11" evidence="1">
    <location>
        <begin position="803"/>
        <end position="817"/>
    </location>
</feature>
<feature type="short sequence motif" description="LFa 12" evidence="1">
    <location>
        <begin position="839"/>
        <end position="847"/>
    </location>
</feature>
<feature type="short sequence motif" description="LFa 13" evidence="1">
    <location>
        <begin position="856"/>
        <end position="862"/>
    </location>
</feature>
<feature type="short sequence motif" description="LFa 14" evidence="1">
    <location>
        <begin position="878"/>
        <end position="888"/>
    </location>
</feature>
<feature type="short sequence motif" description="LFa 15" evidence="1">
    <location>
        <begin position="1129"/>
        <end position="1136"/>
    </location>
</feature>
<feature type="short sequence motif" description="LFa 16" evidence="1">
    <location>
        <begin position="1171"/>
        <end position="1185"/>
    </location>
</feature>
<feature type="short sequence motif" description="LFa 17" evidence="1">
    <location>
        <begin position="1201"/>
        <end position="1209"/>
    </location>
</feature>
<feature type="short sequence motif" description="LFa 18" evidence="1">
    <location>
        <begin position="1234"/>
        <end position="1240"/>
    </location>
</feature>
<feature type="short sequence motif" description="LFa 19" evidence="1">
    <location>
        <begin position="1262"/>
        <end position="1270"/>
    </location>
</feature>
<feature type="short sequence motif" description="LFa 20" evidence="1">
    <location>
        <begin position="1290"/>
        <end position="1299"/>
    </location>
</feature>
<feature type="short sequence motif" description="LFa 21" evidence="1">
    <location>
        <begin position="1330"/>
        <end position="1338"/>
    </location>
</feature>
<feature type="compositionally biased region" description="Low complexity" evidence="2">
    <location>
        <begin position="202"/>
        <end position="214"/>
    </location>
</feature>
<feature type="compositionally biased region" description="Acidic residues" evidence="2">
    <location>
        <begin position="220"/>
        <end position="232"/>
    </location>
</feature>
<feature type="compositionally biased region" description="Basic and acidic residues" evidence="2">
    <location>
        <begin position="233"/>
        <end position="244"/>
    </location>
</feature>
<feature type="compositionally biased region" description="Acidic residues" evidence="2">
    <location>
        <begin position="250"/>
        <end position="259"/>
    </location>
</feature>
<feature type="compositionally biased region" description="Acidic residues" evidence="2">
    <location>
        <begin position="266"/>
        <end position="276"/>
    </location>
</feature>
<feature type="compositionally biased region" description="Basic and acidic residues" evidence="2">
    <location>
        <begin position="293"/>
        <end position="307"/>
    </location>
</feature>
<feature type="compositionally biased region" description="Gly residues" evidence="2">
    <location>
        <begin position="355"/>
        <end position="366"/>
    </location>
</feature>
<feature type="compositionally biased region" description="Acidic residues" evidence="2">
    <location>
        <begin position="451"/>
        <end position="462"/>
    </location>
</feature>
<feature type="compositionally biased region" description="Basic and acidic residues" evidence="2">
    <location>
        <begin position="507"/>
        <end position="517"/>
    </location>
</feature>
<feature type="compositionally biased region" description="Polar residues" evidence="2">
    <location>
        <begin position="518"/>
        <end position="536"/>
    </location>
</feature>
<feature type="compositionally biased region" description="Basic and acidic residues" evidence="2">
    <location>
        <begin position="637"/>
        <end position="647"/>
    </location>
</feature>
<feature type="compositionally biased region" description="Basic and acidic residues" evidence="2">
    <location>
        <begin position="751"/>
        <end position="768"/>
    </location>
</feature>
<feature type="compositionally biased region" description="Basic and acidic residues" evidence="2">
    <location>
        <begin position="823"/>
        <end position="834"/>
    </location>
</feature>
<feature type="compositionally biased region" description="Basic and acidic residues" evidence="2">
    <location>
        <begin position="898"/>
        <end position="911"/>
    </location>
</feature>
<feature type="compositionally biased region" description="Basic and acidic residues" evidence="2">
    <location>
        <begin position="917"/>
        <end position="931"/>
    </location>
</feature>
<feature type="compositionally biased region" description="Basic residues" evidence="2">
    <location>
        <begin position="1028"/>
        <end position="1046"/>
    </location>
</feature>
<feature type="compositionally biased region" description="Low complexity" evidence="2">
    <location>
        <begin position="1094"/>
        <end position="1110"/>
    </location>
</feature>
<feature type="compositionally biased region" description="Polar residues" evidence="2">
    <location>
        <begin position="1135"/>
        <end position="1145"/>
    </location>
</feature>
<feature type="modified residue" description="Phosphoserine" evidence="9 10 11 12 13">
    <location>
        <position position="539"/>
    </location>
</feature>
<feature type="modified residue" description="Phosphoserine" evidence="13">
    <location>
        <position position="1054"/>
    </location>
</feature>
<feature type="modified residue" description="Phosphoserine" evidence="9 10">
    <location>
        <position position="1087"/>
    </location>
</feature>
<feature type="modified residue" description="Phosphoserine" evidence="9 10 11">
    <location>
        <position position="1114"/>
    </location>
</feature>
<feature type="splice variant" id="VSP_030948" description="In isoform 2." evidence="6">
    <location>
        <begin position="938"/>
        <end position="958"/>
    </location>
</feature>
<feature type="sequence conflict" description="In Ref. 1; CAI17187." evidence="7" ref="1">
    <original>A</original>
    <variation>T</variation>
    <location>
        <position position="342"/>
    </location>
</feature>
<feature type="sequence conflict" description="In Ref. 2; AAH75815." evidence="7" ref="2">
    <original>G</original>
    <variation>E</variation>
    <location>
        <position position="444"/>
    </location>
</feature>
<feature type="sequence conflict" description="In Ref. 1; CAI17187." evidence="7" ref="1">
    <original>L</original>
    <variation>S</variation>
    <location>
        <position position="569"/>
    </location>
</feature>
<feature type="sequence conflict" description="In Ref. 1; CAI17187." evidence="7" ref="1">
    <original>G</original>
    <variation>R</variation>
    <location>
        <position position="698"/>
    </location>
</feature>
<feature type="sequence conflict" description="In Ref. 2; AAH75815." evidence="7" ref="2">
    <original>I</original>
    <variation>T</variation>
    <location>
        <position position="816"/>
    </location>
</feature>
<feature type="sequence conflict" description="In Ref. 2; AAH82258." evidence="7" ref="2">
    <original>H</original>
    <variation>Y</variation>
    <location>
        <position position="997"/>
    </location>
</feature>
<feature type="sequence conflict" description="In Ref. 1; CAI17187." evidence="7" ref="1">
    <original>P</original>
    <variation>T</variation>
    <location>
        <position position="1198"/>
    </location>
</feature>
<feature type="turn" evidence="14">
    <location>
        <begin position="1135"/>
        <end position="1137"/>
    </location>
</feature>
<protein>
    <recommendedName>
        <fullName evidence="8">WASH complex subunit 2A</fullName>
    </recommendedName>
</protein>
<keyword id="KW-0002">3D-structure</keyword>
<keyword id="KW-0025">Alternative splicing</keyword>
<keyword id="KW-1003">Cell membrane</keyword>
<keyword id="KW-0967">Endosome</keyword>
<keyword id="KW-0446">Lipid-binding</keyword>
<keyword id="KW-0472">Membrane</keyword>
<keyword id="KW-0597">Phosphoprotein</keyword>
<keyword id="KW-0653">Protein transport</keyword>
<keyword id="KW-1267">Proteomics identification</keyword>
<keyword id="KW-1185">Reference proteome</keyword>
<keyword id="KW-0813">Transport</keyword>
<evidence type="ECO:0000250" key="1">
    <source>
        <dbReference type="UniProtKB" id="Q9Y4E1"/>
    </source>
</evidence>
<evidence type="ECO:0000256" key="2">
    <source>
        <dbReference type="SAM" id="MobiDB-lite"/>
    </source>
</evidence>
<evidence type="ECO:0000269" key="3">
    <source>
    </source>
</evidence>
<evidence type="ECO:0000269" key="4">
    <source>
    </source>
</evidence>
<evidence type="ECO:0000269" key="5">
    <source>
    </source>
</evidence>
<evidence type="ECO:0000303" key="6">
    <source>
    </source>
</evidence>
<evidence type="ECO:0000305" key="7"/>
<evidence type="ECO:0000312" key="8">
    <source>
        <dbReference type="HGNC" id="HGNC:23416"/>
    </source>
</evidence>
<evidence type="ECO:0007744" key="9">
    <source>
    </source>
</evidence>
<evidence type="ECO:0007744" key="10">
    <source>
    </source>
</evidence>
<evidence type="ECO:0007744" key="11">
    <source>
    </source>
</evidence>
<evidence type="ECO:0007744" key="12">
    <source>
    </source>
</evidence>
<evidence type="ECO:0007744" key="13">
    <source>
    </source>
</evidence>
<evidence type="ECO:0007829" key="14">
    <source>
        <dbReference type="PDB" id="8TTT"/>
    </source>
</evidence>
<comment type="function">
    <text evidence="3 4">Acts at least in part as component of the WASH core complex whose assembly at the surface of endosomes inhibits WASH nucleation-promoting factor (NPF) activity in recruiting and activating the Arp2/3 complex to induce actin polymerization and is involved in the fission of tubules that serve as transport intermediates during endosome sorting. Mediates the recruitment of the WASH core complex to endosome membranes via binding to phospholipids and VPS35 of the retromer CSC. Mediates the recruitment of the F-actin-capping protein dimer to the WASH core complex probably promoting localized F-actin polymerization needed for vesicle scission. Via its C-terminus binds various phospholipids, most strongly phosphatidylinositol 4-phosphate (PtdIns-(4)P), phosphatidylinositol 5-phosphate (PtdIns-(5)P) and phosphatidylinositol 3,5-bisphosphate (PtdIns-(3,5)P2). Involved in the endosome-to-plasma membrane trafficking and recycling of SNX27-retromer-dependent cargo proteins, such as GLUT1. Required for the association of DNAJC13, ENTR1, ANKRD50 with retromer CSC subunit VPS35. Required for the endosomal recruitment of CCC complex subunits COMMD1 and CCDC93 as well as the retriever complex subunit VPS35L.</text>
</comment>
<comment type="subunit">
    <text evidence="1 3 5">Component of the WASH core complex also described as WASH regulatory complex (SHRC) composed of WASH (WASHC1, WASH2P or WASH3P), WASHC2 (WASHC2A or WASHC2C), WASHC3, WASHC4 and WASHC5; in the complex interacts (via N-terminus) directly with WASHC1. The WASH core complex associates with the F-actin-capping protein dimer (formed by CAPZA1, CAPZA2 or CAPZA3 and CAPZB) in a transient or substoichiometric manner which was initially described as WASH complex. Interacts with VPS35; mediates the association with the retromer CSC complex. Interacts with FKBP15. Interacts with CCDC93, CCDC22, VPS35L; indicative for an association of the WASH core complex with the CCC and retriever complexes (PubMed:25355947). Directly interacts with TBC1D23 (PubMed:29084197).</text>
</comment>
<comment type="interaction">
    <interactant intactId="EBI-2870155">
        <id>Q641Q2</id>
    </interactant>
    <interactant intactId="EBI-3943153">
        <id>O60826</id>
        <label>CCDC22</label>
    </interactant>
    <organismsDiffer>false</organismsDiffer>
    <experiments>6</experiments>
</comment>
<comment type="interaction">
    <interactant intactId="EBI-2870155">
        <id>Q641Q2</id>
    </interactant>
    <interactant intactId="EBI-1104769">
        <id>Q567U6</id>
        <label>CCDC93</label>
    </interactant>
    <organismsDiffer>false</organismsDiffer>
    <experiments>9</experiments>
</comment>
<comment type="subcellular location">
    <subcellularLocation>
        <location evidence="4">Early endosome membrane</location>
    </subcellularLocation>
    <subcellularLocation>
        <location evidence="1">Cell membrane</location>
    </subcellularLocation>
</comment>
<comment type="alternative products">
    <event type="alternative splicing"/>
    <isoform>
        <id>Q641Q2-1</id>
        <name>1</name>
        <sequence type="displayed"/>
    </isoform>
    <isoform>
        <id>Q641Q2-2</id>
        <name>2</name>
        <sequence type="described" ref="VSP_030948"/>
    </isoform>
</comment>
<comment type="domain">
    <text evidence="1">The LFa (leucine-phenylalanine-acidic) motif bind directly to VPS35 of retromer CSC; adjacent motifs can act cooperatively to bind multiple CSCs, although there is significant variability in the affinities of different motifs for retromer.</text>
</comment>
<comment type="miscellaneous">
    <text evidence="7">In human, WASHC2 has undergone evolutionary duplication, with 2 highly homologous family members WASHC2A and WASHC2C.</text>
</comment>
<comment type="similarity">
    <text evidence="7">Belongs to the FAM21 family.</text>
</comment>
<comment type="caution">
    <text evidence="7">A WASHC2C construct with WASHC2A-specific sequence insertions has been used in a number of experiments; the results are included in the WASHC2C entry.</text>
</comment>
<comment type="sequence caution" evidence="7">
    <conflict type="erroneous gene model prediction">
        <sequence resource="EMBL-CDS" id="CAI17187"/>
    </conflict>
</comment>
<dbReference type="EMBL" id="AL442003">
    <property type="status" value="NOT_ANNOTATED_CDS"/>
    <property type="molecule type" value="Genomic_DNA"/>
</dbReference>
<dbReference type="EMBL" id="AL450382">
    <property type="status" value="NOT_ANNOTATED_CDS"/>
    <property type="molecule type" value="Genomic_DNA"/>
</dbReference>
<dbReference type="EMBL" id="AL954360">
    <property type="protein sequence ID" value="CAI17187.1"/>
    <property type="status" value="ALT_SEQ"/>
    <property type="molecule type" value="Genomic_DNA"/>
</dbReference>
<dbReference type="EMBL" id="BC075815">
    <property type="protein sequence ID" value="AAH75815.1"/>
    <property type="molecule type" value="mRNA"/>
</dbReference>
<dbReference type="EMBL" id="BC082258">
    <property type="protein sequence ID" value="AAH82258.2"/>
    <property type="molecule type" value="mRNA"/>
</dbReference>
<dbReference type="CCDS" id="CCDS41527.1">
    <molecule id="Q641Q2-1"/>
</dbReference>
<dbReference type="CCDS" id="CCDS76303.1">
    <molecule id="Q641Q2-2"/>
</dbReference>
<dbReference type="RefSeq" id="NP_001005751.1">
    <molecule id="Q641Q2-1"/>
    <property type="nucleotide sequence ID" value="NM_001005751.3"/>
</dbReference>
<dbReference type="RefSeq" id="NP_001278327.1">
    <molecule id="Q641Q2-2"/>
    <property type="nucleotide sequence ID" value="NM_001291398.2"/>
</dbReference>
<dbReference type="PDB" id="8RKS">
    <property type="method" value="X-ray"/>
    <property type="resolution" value="3.10 A"/>
    <property type="chains" value="I/J/K/L=1332-1338"/>
</dbReference>
<dbReference type="PDB" id="8TTA">
    <property type="method" value="X-ray"/>
    <property type="resolution" value="3.46 A"/>
    <property type="chains" value="E/F=1328-1341"/>
</dbReference>
<dbReference type="PDB" id="8TTC">
    <property type="method" value="X-ray"/>
    <property type="resolution" value="3.01 A"/>
    <property type="chains" value="E=1289-1302"/>
</dbReference>
<dbReference type="PDB" id="8TTD">
    <property type="method" value="X-ray"/>
    <property type="resolution" value="2.01 A"/>
    <property type="chains" value="B=1328-1341"/>
</dbReference>
<dbReference type="PDB" id="8TTT">
    <property type="method" value="X-ray"/>
    <property type="resolution" value="2.35 A"/>
    <property type="chains" value="B=1124-1140"/>
</dbReference>
<dbReference type="PDB" id="8TTU">
    <property type="method" value="X-ray"/>
    <property type="resolution" value="2.36 A"/>
    <property type="chains" value="B=1261-1274"/>
</dbReference>
<dbReference type="PDB" id="8TTV">
    <property type="method" value="X-ray"/>
    <property type="resolution" value="2.00 A"/>
    <property type="chains" value="B=1289-1302"/>
</dbReference>
<dbReference type="PDBsum" id="8RKS"/>
<dbReference type="PDBsum" id="8TTA"/>
<dbReference type="PDBsum" id="8TTC"/>
<dbReference type="PDBsum" id="8TTD"/>
<dbReference type="PDBsum" id="8TTT"/>
<dbReference type="PDBsum" id="8TTU"/>
<dbReference type="PDBsum" id="8TTV"/>
<dbReference type="SMR" id="Q641Q2"/>
<dbReference type="BioGRID" id="132390">
    <property type="interactions" value="131"/>
</dbReference>
<dbReference type="ComplexPortal" id="CPX-1172">
    <property type="entry name" value="WASH complex, variant WASHC1/WASHC2A"/>
</dbReference>
<dbReference type="ComplexPortal" id="CPX-1173">
    <property type="entry name" value="WASH complex, variant WASH2P/WASHC2A"/>
</dbReference>
<dbReference type="ComplexPortal" id="CPX-1174">
    <property type="entry name" value="WASH complex, variant WASH3P/WASHC2A"/>
</dbReference>
<dbReference type="ComplexPortal" id="CPX-1175">
    <property type="entry name" value="WASH complex, variant WASH4P/WASHC2A"/>
</dbReference>
<dbReference type="ComplexPortal" id="CPX-1176">
    <property type="entry name" value="WASH complex, variant WASH6P/WASHC2A"/>
</dbReference>
<dbReference type="CORUM" id="Q641Q2"/>
<dbReference type="FunCoup" id="Q641Q2">
    <property type="interactions" value="2363"/>
</dbReference>
<dbReference type="IntAct" id="Q641Q2">
    <property type="interactions" value="71"/>
</dbReference>
<dbReference type="MINT" id="Q641Q2"/>
<dbReference type="STRING" id="9606.ENSP00000282633"/>
<dbReference type="TCDB" id="9.A.3.1.2">
    <property type="family name" value="the sorting nexin27 (snx27)-retromer assembly apparatus (retromeraa) family"/>
</dbReference>
<dbReference type="iPTMnet" id="Q641Q2"/>
<dbReference type="PhosphoSitePlus" id="Q641Q2"/>
<dbReference type="BioMuta" id="WASHC2A"/>
<dbReference type="DMDM" id="166971555"/>
<dbReference type="jPOST" id="Q641Q2"/>
<dbReference type="MassIVE" id="Q641Q2"/>
<dbReference type="PaxDb" id="9606-ENSP00000282633"/>
<dbReference type="PeptideAtlas" id="Q641Q2"/>
<dbReference type="ProteomicsDB" id="63762"/>
<dbReference type="ProteomicsDB" id="65910">
    <molecule id="Q641Q2-1"/>
</dbReference>
<dbReference type="ProteomicsDB" id="65911">
    <molecule id="Q641Q2-2"/>
</dbReference>
<dbReference type="Pumba" id="Q641Q2"/>
<dbReference type="Antibodypedia" id="76770">
    <property type="antibodies" value="19 antibodies from 7 providers"/>
</dbReference>
<dbReference type="DNASU" id="387680"/>
<dbReference type="Ensembl" id="ENST00000282633.10">
    <molecule id="Q641Q2-1"/>
    <property type="protein sequence ID" value="ENSP00000282633.5"/>
    <property type="gene ID" value="ENSG00000099290.17"/>
</dbReference>
<dbReference type="Ensembl" id="ENST00000351071.11">
    <molecule id="Q641Q2-2"/>
    <property type="protein sequence ID" value="ENSP00000344037.6"/>
    <property type="gene ID" value="ENSG00000099290.17"/>
</dbReference>
<dbReference type="GeneID" id="387680"/>
<dbReference type="KEGG" id="hsa:387680"/>
<dbReference type="MANE-Select" id="ENST00000282633.10">
    <property type="protein sequence ID" value="ENSP00000282633.5"/>
    <property type="RefSeq nucleotide sequence ID" value="NM_001005751.3"/>
    <property type="RefSeq protein sequence ID" value="NP_001005751.1"/>
</dbReference>
<dbReference type="UCSC" id="uc001jjb.4">
    <molecule id="Q641Q2-1"/>
    <property type="organism name" value="human"/>
</dbReference>
<dbReference type="AGR" id="HGNC:23416"/>
<dbReference type="CTD" id="387680"/>
<dbReference type="DisGeNET" id="387680"/>
<dbReference type="GeneCards" id="WASHC2A"/>
<dbReference type="HGNC" id="HGNC:23416">
    <property type="gene designation" value="WASHC2A"/>
</dbReference>
<dbReference type="HPA" id="ENSG00000099290">
    <property type="expression patterns" value="Low tissue specificity"/>
</dbReference>
<dbReference type="neXtProt" id="NX_Q641Q2"/>
<dbReference type="PharmGKB" id="PA134902481"/>
<dbReference type="VEuPathDB" id="HostDB:ENSG00000099290"/>
<dbReference type="eggNOG" id="ENOG502QTIY">
    <property type="taxonomic scope" value="Eukaryota"/>
</dbReference>
<dbReference type="GeneTree" id="ENSGT00940000153997"/>
<dbReference type="InParanoid" id="Q641Q2"/>
<dbReference type="OMA" id="IHTIFYD"/>
<dbReference type="OrthoDB" id="751084at2759"/>
<dbReference type="PAN-GO" id="Q641Q2">
    <property type="GO annotations" value="6 GO annotations based on evolutionary models"/>
</dbReference>
<dbReference type="PhylomeDB" id="Q641Q2"/>
<dbReference type="TreeFam" id="TF329309"/>
<dbReference type="PathwayCommons" id="Q641Q2"/>
<dbReference type="SignaLink" id="Q641Q2"/>
<dbReference type="BioGRID-ORCS" id="387680">
    <property type="hits" value="23 hits in 1074 CRISPR screens"/>
</dbReference>
<dbReference type="ChiTaRS" id="WASHC2A">
    <property type="organism name" value="human"/>
</dbReference>
<dbReference type="GenomeRNAi" id="387680"/>
<dbReference type="Pharos" id="Q641Q2">
    <property type="development level" value="Tdark"/>
</dbReference>
<dbReference type="PRO" id="PR:Q641Q2"/>
<dbReference type="Proteomes" id="UP000005640">
    <property type="component" value="Chromosome 10"/>
</dbReference>
<dbReference type="RNAct" id="Q641Q2">
    <property type="molecule type" value="protein"/>
</dbReference>
<dbReference type="Bgee" id="ENSG00000099290">
    <property type="expression patterns" value="Expressed in calcaneal tendon and 102 other cell types or tissues"/>
</dbReference>
<dbReference type="ExpressionAtlas" id="Q641Q2">
    <property type="expression patterns" value="baseline and differential"/>
</dbReference>
<dbReference type="GO" id="GO:0005829">
    <property type="term" value="C:cytosol"/>
    <property type="evidence" value="ECO:0000314"/>
    <property type="project" value="HPA"/>
</dbReference>
<dbReference type="GO" id="GO:0005769">
    <property type="term" value="C:early endosome"/>
    <property type="evidence" value="ECO:0000250"/>
    <property type="project" value="UniProtKB"/>
</dbReference>
<dbReference type="GO" id="GO:0031901">
    <property type="term" value="C:early endosome membrane"/>
    <property type="evidence" value="ECO:0000303"/>
    <property type="project" value="ComplexPortal"/>
</dbReference>
<dbReference type="GO" id="GO:0043231">
    <property type="term" value="C:intracellular membrane-bounded organelle"/>
    <property type="evidence" value="ECO:0000314"/>
    <property type="project" value="HPA"/>
</dbReference>
<dbReference type="GO" id="GO:0005730">
    <property type="term" value="C:nucleolus"/>
    <property type="evidence" value="ECO:0000314"/>
    <property type="project" value="HPA"/>
</dbReference>
<dbReference type="GO" id="GO:0005886">
    <property type="term" value="C:plasma membrane"/>
    <property type="evidence" value="ECO:0007669"/>
    <property type="project" value="UniProtKB-SubCell"/>
</dbReference>
<dbReference type="GO" id="GO:0071203">
    <property type="term" value="C:WASH complex"/>
    <property type="evidence" value="ECO:0000250"/>
    <property type="project" value="UniProtKB"/>
</dbReference>
<dbReference type="GO" id="GO:1901981">
    <property type="term" value="F:phosphatidylinositol phosphate binding"/>
    <property type="evidence" value="ECO:0000318"/>
    <property type="project" value="GO_Central"/>
</dbReference>
<dbReference type="GO" id="GO:1905394">
    <property type="term" value="F:retromer complex binding"/>
    <property type="evidence" value="ECO:0000318"/>
    <property type="project" value="GO_Central"/>
</dbReference>
<dbReference type="GO" id="GO:0016197">
    <property type="term" value="P:endosomal transport"/>
    <property type="evidence" value="ECO:0000303"/>
    <property type="project" value="ComplexPortal"/>
</dbReference>
<dbReference type="GO" id="GO:0036010">
    <property type="term" value="P:protein localization to endosome"/>
    <property type="evidence" value="ECO:0000315"/>
    <property type="project" value="UniProtKB"/>
</dbReference>
<dbReference type="GO" id="GO:0015031">
    <property type="term" value="P:protein transport"/>
    <property type="evidence" value="ECO:0007669"/>
    <property type="project" value="UniProtKB-KW"/>
</dbReference>
<dbReference type="GO" id="GO:0034315">
    <property type="term" value="P:regulation of Arp2/3 complex-mediated actin nucleation"/>
    <property type="evidence" value="ECO:0000303"/>
    <property type="project" value="ComplexPortal"/>
</dbReference>
<dbReference type="GO" id="GO:0042147">
    <property type="term" value="P:retrograde transport, endosome to Golgi"/>
    <property type="evidence" value="ECO:0000250"/>
    <property type="project" value="UniProtKB"/>
</dbReference>
<dbReference type="InterPro" id="IPR029341">
    <property type="entry name" value="FAM21/CAPZIP"/>
</dbReference>
<dbReference type="PANTHER" id="PTHR21669">
    <property type="entry name" value="CAPZ-INTERACTING PROTEIN AND RELATED PROTEINS"/>
    <property type="match status" value="1"/>
</dbReference>
<dbReference type="PANTHER" id="PTHR21669:SF38">
    <property type="entry name" value="WASH COMPLEX SUBUNIT 2A-RELATED"/>
    <property type="match status" value="1"/>
</dbReference>
<dbReference type="Pfam" id="PF15255">
    <property type="entry name" value="CAP-ZIP_m"/>
    <property type="match status" value="1"/>
</dbReference>
<name>WAC2A_HUMAN</name>
<sequence length="1341" mass="147184">MMNRTTPDQELAPASEPVWERPWSVEEIRRSSQSWSLAADAGLLQFLQEFSQQTISRTHEIKKQVDGLIRETKATDCRLHNVFNDFLMLSNTQFIENRVYDEEVEEPVLKAEAEKTEQEKTREQKEVDLIPKVQEAVNYGLQVLDSAFEQLDIKAGNSDSEEDDANGRVELILEPKDLYIDRPLPYLIGSKLFMEQEDVGLGELSSEEGSVGSDRGSIVDTEEEKEEEESDEDFAHHSDNEQNRHTTQMSDEEEDDDGCDLFADSEKEEEDIEDIEENTRPKRSRPTSFADELAARIKGDAVGRVDEEPTTLPSGEAKPRKTLKEKKERRTPSDDEEDNLFAPPKLTDEDFSPFGSGGGLFSGGKGLFDDEDEESDLFTEAPQDRQAGASVKEESSSSKPGKKIPAGAVSVFLGDTDVFGAASVPSMKEPQKPEQPTPRKSPYGPPPTGLFDDDDGDDDDDFFSAPHSKPSKTGKVQSTADIFGDEEGDLFKEKAVASPEATVSQTDENKARAEKKVTLSSSKNLKPSSETKTQKGLFSDEEDSEDLFSSQSASKLKGASLLPGKLPTLVSLFDDEDEEDNLFGGTAAKKQTLCLQAQREEKAKASELSKKKASALLFSSDEEDQWNIPASQTHLASDSRSKGEPRDSGTLQSQEAKAVKKTSLFEEDEEDDLFAIAKDSQKKTQRVSLLFEDDVDSGGSLFGSPPTSVPPATKKKETVSEAPPLLFSDEEEKEAQLGVKSVDKKVESAKESLKFGRTDVAESEKEGLLTRSAQETVKHSDLFSSSSPWDKGTKPRTKTVLSLFDEEEDKMEDQNIIQAPQKEVGKGRDPDAHPKSTGVFQDEELLFSHKLQKDNDPDVDLFAGTKKTKLLEPSVGSLFGDDEDDDLFSSAKSQPLVQEKKRVVKKDHSVDSFKNQKHPESIQGSKEKGIWKPETPQDSSGLAPFKTKEPSTRIGKIQANLAINPAALLPTAASQISEVKPVLPELAFPSSEHRRSHGLESVPVLPGSGEAGVSFDLPAQADTLHSANKSRVKMRGKRRPQTRAARRLAAQESSETEDMSVPRGPIAQWADGAISPNGHRPQLRAASGEDSTEEALAAAAAPWEGGPVPGVDRSPFAKSLGHSRGEADLFDSGDIFSTGTGSQSVERTKPKAKIAENPANPPVGGKAKSPMFPALGEASSDDDLFQSAKPKPAKKTNPFPLLEDEDDLFTDQKVKKNETKSNSQQDVILTTQDIFEDDIFATEAIKPSQKTREKEKTLESNLFDDNIDIFADLTVKPKEKSKKKVEAKSIFDDDMDDIFSSGIQAKTTKPKSRSAQAAPEPRFEHKVSNIFDDPLNAFGGQ</sequence>
<proteinExistence type="evidence at protein level"/>
<gene>
    <name evidence="8" type="primary">WASHC2A</name>
    <name evidence="8" type="synonym">FAM21A</name>
    <name evidence="8" type="synonym">FAM21B</name>
</gene>
<organism>
    <name type="scientific">Homo sapiens</name>
    <name type="common">Human</name>
    <dbReference type="NCBI Taxonomy" id="9606"/>
    <lineage>
        <taxon>Eukaryota</taxon>
        <taxon>Metazoa</taxon>
        <taxon>Chordata</taxon>
        <taxon>Craniata</taxon>
        <taxon>Vertebrata</taxon>
        <taxon>Euteleostomi</taxon>
        <taxon>Mammalia</taxon>
        <taxon>Eutheria</taxon>
        <taxon>Euarchontoglires</taxon>
        <taxon>Primates</taxon>
        <taxon>Haplorrhini</taxon>
        <taxon>Catarrhini</taxon>
        <taxon>Hominidae</taxon>
        <taxon>Homo</taxon>
    </lineage>
</organism>
<reference key="1">
    <citation type="journal article" date="2004" name="Nature">
        <title>The DNA sequence and comparative analysis of human chromosome 10.</title>
        <authorList>
            <person name="Deloukas P."/>
            <person name="Earthrowl M.E."/>
            <person name="Grafham D.V."/>
            <person name="Rubenfield M."/>
            <person name="French L."/>
            <person name="Steward C.A."/>
            <person name="Sims S.K."/>
            <person name="Jones M.C."/>
            <person name="Searle S."/>
            <person name="Scott C."/>
            <person name="Howe K."/>
            <person name="Hunt S.E."/>
            <person name="Andrews T.D."/>
            <person name="Gilbert J.G.R."/>
            <person name="Swarbreck D."/>
            <person name="Ashurst J.L."/>
            <person name="Taylor A."/>
            <person name="Battles J."/>
            <person name="Bird C.P."/>
            <person name="Ainscough R."/>
            <person name="Almeida J.P."/>
            <person name="Ashwell R.I.S."/>
            <person name="Ambrose K.D."/>
            <person name="Babbage A.K."/>
            <person name="Bagguley C.L."/>
            <person name="Bailey J."/>
            <person name="Banerjee R."/>
            <person name="Bates K."/>
            <person name="Beasley H."/>
            <person name="Bray-Allen S."/>
            <person name="Brown A.J."/>
            <person name="Brown J.Y."/>
            <person name="Burford D.C."/>
            <person name="Burrill W."/>
            <person name="Burton J."/>
            <person name="Cahill P."/>
            <person name="Camire D."/>
            <person name="Carter N.P."/>
            <person name="Chapman J.C."/>
            <person name="Clark S.Y."/>
            <person name="Clarke G."/>
            <person name="Clee C.M."/>
            <person name="Clegg S."/>
            <person name="Corby N."/>
            <person name="Coulson A."/>
            <person name="Dhami P."/>
            <person name="Dutta I."/>
            <person name="Dunn M."/>
            <person name="Faulkner L."/>
            <person name="Frankish A."/>
            <person name="Frankland J.A."/>
            <person name="Garner P."/>
            <person name="Garnett J."/>
            <person name="Gribble S."/>
            <person name="Griffiths C."/>
            <person name="Grocock R."/>
            <person name="Gustafson E."/>
            <person name="Hammond S."/>
            <person name="Harley J.L."/>
            <person name="Hart E."/>
            <person name="Heath P.D."/>
            <person name="Ho T.P."/>
            <person name="Hopkins B."/>
            <person name="Horne J."/>
            <person name="Howden P.J."/>
            <person name="Huckle E."/>
            <person name="Hynds C."/>
            <person name="Johnson C."/>
            <person name="Johnson D."/>
            <person name="Kana A."/>
            <person name="Kay M."/>
            <person name="Kimberley A.M."/>
            <person name="Kershaw J.K."/>
            <person name="Kokkinaki M."/>
            <person name="Laird G.K."/>
            <person name="Lawlor S."/>
            <person name="Lee H.M."/>
            <person name="Leongamornlert D.A."/>
            <person name="Laird G."/>
            <person name="Lloyd C."/>
            <person name="Lloyd D.M."/>
            <person name="Loveland J."/>
            <person name="Lovell J."/>
            <person name="McLaren S."/>
            <person name="McLay K.E."/>
            <person name="McMurray A."/>
            <person name="Mashreghi-Mohammadi M."/>
            <person name="Matthews L."/>
            <person name="Milne S."/>
            <person name="Nickerson T."/>
            <person name="Nguyen M."/>
            <person name="Overton-Larty E."/>
            <person name="Palmer S.A."/>
            <person name="Pearce A.V."/>
            <person name="Peck A.I."/>
            <person name="Pelan S."/>
            <person name="Phillimore B."/>
            <person name="Porter K."/>
            <person name="Rice C.M."/>
            <person name="Rogosin A."/>
            <person name="Ross M.T."/>
            <person name="Sarafidou T."/>
            <person name="Sehra H.K."/>
            <person name="Shownkeen R."/>
            <person name="Skuce C.D."/>
            <person name="Smith M."/>
            <person name="Standring L."/>
            <person name="Sycamore N."/>
            <person name="Tester J."/>
            <person name="Thorpe A."/>
            <person name="Torcasso W."/>
            <person name="Tracey A."/>
            <person name="Tromans A."/>
            <person name="Tsolas J."/>
            <person name="Wall M."/>
            <person name="Walsh J."/>
            <person name="Wang H."/>
            <person name="Weinstock K."/>
            <person name="West A.P."/>
            <person name="Willey D.L."/>
            <person name="Whitehead S.L."/>
            <person name="Wilming L."/>
            <person name="Wray P.W."/>
            <person name="Young L."/>
            <person name="Chen Y."/>
            <person name="Lovering R.C."/>
            <person name="Moschonas N.K."/>
            <person name="Siebert R."/>
            <person name="Fechtel K."/>
            <person name="Bentley D."/>
            <person name="Durbin R.M."/>
            <person name="Hubbard T."/>
            <person name="Doucette-Stamm L."/>
            <person name="Beck S."/>
            <person name="Smith D.R."/>
            <person name="Rogers J."/>
        </authorList>
    </citation>
    <scope>NUCLEOTIDE SEQUENCE [LARGE SCALE GENOMIC DNA]</scope>
</reference>
<reference key="2">
    <citation type="journal article" date="2004" name="Genome Res.">
        <title>The status, quality, and expansion of the NIH full-length cDNA project: the Mammalian Gene Collection (MGC).</title>
        <authorList>
            <consortium name="The MGC Project Team"/>
        </authorList>
    </citation>
    <scope>NUCLEOTIDE SEQUENCE [LARGE SCALE MRNA] (ISOFORMS 1 AND 2)</scope>
    <source>
        <tissue>Eye</tissue>
        <tissue>Spleen</tissue>
    </source>
</reference>
<reference key="3">
    <citation type="journal article" date="2008" name="Proc. Natl. Acad. Sci. U.S.A.">
        <title>A quantitative atlas of mitotic phosphorylation.</title>
        <authorList>
            <person name="Dephoure N."/>
            <person name="Zhou C."/>
            <person name="Villen J."/>
            <person name="Beausoleil S.A."/>
            <person name="Bakalarski C.E."/>
            <person name="Elledge S.J."/>
            <person name="Gygi S.P."/>
        </authorList>
    </citation>
    <scope>PHOSPHORYLATION [LARGE SCALE ANALYSIS] AT SER-539; SER-1087 AND SER-1114</scope>
    <scope>IDENTIFICATION BY MASS SPECTROMETRY [LARGE SCALE ANALYSIS]</scope>
    <source>
        <tissue>Cervix carcinoma</tissue>
    </source>
</reference>
<reference key="4">
    <citation type="journal article" date="2009" name="Sci. Signal.">
        <title>Quantitative phosphoproteomic analysis of T cell receptor signaling reveals system-wide modulation of protein-protein interactions.</title>
        <authorList>
            <person name="Mayya V."/>
            <person name="Lundgren D.H."/>
            <person name="Hwang S.-I."/>
            <person name="Rezaul K."/>
            <person name="Wu L."/>
            <person name="Eng J.K."/>
            <person name="Rodionov V."/>
            <person name="Han D.K."/>
        </authorList>
    </citation>
    <scope>PHOSPHORYLATION [LARGE SCALE ANALYSIS] AT SER-539; SER-1087 AND SER-1114</scope>
    <scope>IDENTIFICATION BY MASS SPECTROMETRY [LARGE SCALE ANALYSIS]</scope>
    <source>
        <tissue>Leukemic T-cell</tissue>
    </source>
</reference>
<reference key="5">
    <citation type="journal article" date="2010" name="Sci. Signal.">
        <title>Quantitative phosphoproteomics reveals widespread full phosphorylation site occupancy during mitosis.</title>
        <authorList>
            <person name="Olsen J.V."/>
            <person name="Vermeulen M."/>
            <person name="Santamaria A."/>
            <person name="Kumar C."/>
            <person name="Miller M.L."/>
            <person name="Jensen L.J."/>
            <person name="Gnad F."/>
            <person name="Cox J."/>
            <person name="Jensen T.S."/>
            <person name="Nigg E.A."/>
            <person name="Brunak S."/>
            <person name="Mann M."/>
        </authorList>
    </citation>
    <scope>PHOSPHORYLATION [LARGE SCALE ANALYSIS] AT SER-539 AND SER-1114</scope>
    <scope>IDENTIFICATION BY MASS SPECTROMETRY [LARGE SCALE ANALYSIS]</scope>
    <source>
        <tissue>Cervix carcinoma</tissue>
    </source>
</reference>
<reference key="6">
    <citation type="journal article" date="2011" name="BMC Syst. Biol.">
        <title>Initial characterization of the human central proteome.</title>
        <authorList>
            <person name="Burkard T.R."/>
            <person name="Planyavsky M."/>
            <person name="Kaupe I."/>
            <person name="Breitwieser F.P."/>
            <person name="Buerckstuemmer T."/>
            <person name="Bennett K.L."/>
            <person name="Superti-Furga G."/>
            <person name="Colinge J."/>
        </authorList>
    </citation>
    <scope>IDENTIFICATION BY MASS SPECTROMETRY [LARGE SCALE ANALYSIS]</scope>
</reference>
<reference key="7">
    <citation type="journal article" date="2011" name="Sci. Signal.">
        <title>System-wide temporal characterization of the proteome and phosphoproteome of human embryonic stem cell differentiation.</title>
        <authorList>
            <person name="Rigbolt K.T."/>
            <person name="Prokhorova T.A."/>
            <person name="Akimov V."/>
            <person name="Henningsen J."/>
            <person name="Johansen P.T."/>
            <person name="Kratchmarova I."/>
            <person name="Kassem M."/>
            <person name="Mann M."/>
            <person name="Olsen J.V."/>
            <person name="Blagoev B."/>
        </authorList>
    </citation>
    <scope>PHOSPHORYLATION [LARGE SCALE ANALYSIS] AT SER-539</scope>
    <scope>IDENTIFICATION BY MASS SPECTROMETRY [LARGE SCALE ANALYSIS]</scope>
</reference>
<reference key="8">
    <citation type="journal article" date="2013" name="J. Proteome Res.">
        <title>Toward a comprehensive characterization of a human cancer cell phosphoproteome.</title>
        <authorList>
            <person name="Zhou H."/>
            <person name="Di Palma S."/>
            <person name="Preisinger C."/>
            <person name="Peng M."/>
            <person name="Polat A.N."/>
            <person name="Heck A.J."/>
            <person name="Mohammed S."/>
        </authorList>
    </citation>
    <scope>PHOSPHORYLATION [LARGE SCALE ANALYSIS] AT SER-539 AND SER-1054</scope>
    <scope>IDENTIFICATION BY MASS SPECTROMETRY [LARGE SCALE ANALYSIS]</scope>
    <source>
        <tissue>Cervix carcinoma</tissue>
        <tissue>Erythroleukemia</tissue>
    </source>
</reference>
<reference key="9">
    <citation type="journal article" date="2014" name="J. Proteomics">
        <title>An enzyme assisted RP-RPLC approach for in-depth analysis of human liver phosphoproteome.</title>
        <authorList>
            <person name="Bian Y."/>
            <person name="Song C."/>
            <person name="Cheng K."/>
            <person name="Dong M."/>
            <person name="Wang F."/>
            <person name="Huang J."/>
            <person name="Sun D."/>
            <person name="Wang L."/>
            <person name="Ye M."/>
            <person name="Zou H."/>
        </authorList>
    </citation>
    <scope>IDENTIFICATION BY MASS SPECTROMETRY [LARGE SCALE ANALYSIS]</scope>
    <source>
        <tissue>Liver</tissue>
    </source>
</reference>
<reference key="10">
    <citation type="journal article" date="2015" name="Mol. Biol. Cell">
        <title>COMMD1 is linked to the WASH complex and regulates endosomal trafficking of the copper transporter ATP7A.</title>
        <authorList>
            <person name="Phillips-Krawczak C.A."/>
            <person name="Singla A."/>
            <person name="Starokadomskyy P."/>
            <person name="Deng Z."/>
            <person name="Osborne D.G."/>
            <person name="Li H."/>
            <person name="Dick C.J."/>
            <person name="Gomez T.S."/>
            <person name="Koenecke M."/>
            <person name="Zhang J.S."/>
            <person name="Dai H."/>
            <person name="Sifuentes-Dominguez L.F."/>
            <person name="Geng L.N."/>
            <person name="Kaufmann S.H."/>
            <person name="Hein M.Y."/>
            <person name="Wallis M."/>
            <person name="McGaughran J."/>
            <person name="Gecz J."/>
            <person name="van de Sluis B."/>
            <person name="Billadeau D.D."/>
            <person name="Burstein E."/>
        </authorList>
    </citation>
    <scope>FUNCTION</scope>
    <scope>INTERACTION WITH CCDC93; CCDC22 AND VPS35L</scope>
</reference>
<reference key="11">
    <citation type="journal article" date="2017" name="Nat. Cell Biol.">
        <title>Retriever is a multiprotein complex for retromer-independent endosomal cargo recycling.</title>
        <authorList>
            <person name="McNally K.E."/>
            <person name="Faulkner R."/>
            <person name="Steinberg F."/>
            <person name="Gallon M."/>
            <person name="Ghai R."/>
            <person name="Pim D."/>
            <person name="Langton P."/>
            <person name="Pearson N."/>
            <person name="Danson C.M."/>
            <person name="Naegele H."/>
            <person name="Morris L.L."/>
            <person name="Singla A."/>
            <person name="Overlee B.L."/>
            <person name="Heesom K.J."/>
            <person name="Sessions R."/>
            <person name="Banks L."/>
            <person name="Collins B.M."/>
            <person name="Berger I."/>
            <person name="Billadeau D.D."/>
            <person name="Burstein E."/>
            <person name="Cullen P.J."/>
        </authorList>
    </citation>
    <scope>FUNCTION</scope>
    <scope>SUBCELLULAR LOCATION</scope>
</reference>
<reference key="12">
    <citation type="journal article" date="2017" name="Nat. Cell Biol.">
        <title>TBC1D23 is a bridging factor for endosomal vesicle capture by golgins at the trans-Golgi.</title>
        <authorList>
            <person name="Shin J.J.H."/>
            <person name="Gillingham A.K."/>
            <person name="Begum F."/>
            <person name="Chadwick J."/>
            <person name="Munro S."/>
        </authorList>
    </citation>
    <scope>INTERACTION WITH TBC1D23</scope>
</reference>
<accession>Q641Q2</accession>
<accession>A2A3S2</accession>
<accession>A2A3U6</accession>
<accession>Q5SNT6</accession>
<accession>Q6DHY0</accession>